<gene>
    <name type="primary">Krtap6-5</name>
    <name type="synonym">Krtap16-8</name>
    <name evidence="9" type="synonym">Krtap16.8</name>
</gene>
<comment type="function">
    <text evidence="7">In the hair cortex, hair keratin intermediate filaments are embedded in an interfilamentous matrix, consisting of hair keratin-associated proteins (KRTAP), which are essential for the formation of a rigid and resistant hair shaft through their extensive disulfide bond cross-linking with abundant cysteine residues of hair keratins. The matrix proteins include the high-sulfur and high-glycine-tyrosine keratins.</text>
</comment>
<comment type="subunit">
    <text evidence="1">Interacts with hair keratins.</text>
</comment>
<comment type="tissue specificity">
    <text evidence="4 5">Strong expression in narrowly defined pattern restricted to the lower and middle cortical regions of the hair shaft in both developing and cycling hair. During hair follicle regression (catagen), expression levels decrease until expression is no longer detectable in follicles at resting stage (telogen).</text>
</comment>
<comment type="induction">
    <text evidence="3 6">Expression in skin and hair follicle is regulated by HOXC13 and by GATA3.</text>
</comment>
<comment type="similarity">
    <text evidence="7">Belongs to the KRTAP type 6 family.</text>
</comment>
<protein>
    <recommendedName>
        <fullName>Keratin-associated protein 6-5</fullName>
    </recommendedName>
    <alternativeName>
        <fullName evidence="8">Keratin-associated protein 16-8</fullName>
    </alternativeName>
    <alternativeName>
        <fullName evidence="9">Keratin-associated protein 16.8</fullName>
    </alternativeName>
</protein>
<sequence>MCGYYGNYYGGRGYGCCGCGGLGYGYGGLGCGYGSYYGCGYRGLGCGYGYGCGYGSRSLYGCGYGCGSGYGSGFGYYY</sequence>
<organism>
    <name type="scientific">Mus musculus</name>
    <name type="common">Mouse</name>
    <dbReference type="NCBI Taxonomy" id="10090"/>
    <lineage>
        <taxon>Eukaryota</taxon>
        <taxon>Metazoa</taxon>
        <taxon>Chordata</taxon>
        <taxon>Craniata</taxon>
        <taxon>Vertebrata</taxon>
        <taxon>Euteleostomi</taxon>
        <taxon>Mammalia</taxon>
        <taxon>Eutheria</taxon>
        <taxon>Euarchontoglires</taxon>
        <taxon>Glires</taxon>
        <taxon>Rodentia</taxon>
        <taxon>Myomorpha</taxon>
        <taxon>Muroidea</taxon>
        <taxon>Muridae</taxon>
        <taxon>Murinae</taxon>
        <taxon>Mus</taxon>
        <taxon>Mus</taxon>
    </lineage>
</organism>
<evidence type="ECO:0000250" key="1"/>
<evidence type="ECO:0000255" key="2"/>
<evidence type="ECO:0000269" key="3">
    <source>
    </source>
</evidence>
<evidence type="ECO:0000269" key="4">
    <source>
    </source>
</evidence>
<evidence type="ECO:0000269" key="5">
    <source>
    </source>
</evidence>
<evidence type="ECO:0000269" key="6">
    <source>
    </source>
</evidence>
<evidence type="ECO:0000305" key="7"/>
<evidence type="ECO:0000312" key="8">
    <source>
        <dbReference type="EMBL" id="AAI32613.1"/>
    </source>
</evidence>
<evidence type="ECO:0000312" key="9">
    <source>
        <dbReference type="EMBL" id="AAK52896.1"/>
    </source>
</evidence>
<evidence type="ECO:0000312" key="10">
    <source>
        <dbReference type="EMBL" id="BAC25027.1"/>
    </source>
</evidence>
<proteinExistence type="evidence at transcript level"/>
<name>KRA65_MOUSE</name>
<feature type="chain" id="PRO_0000356217" description="Keratin-associated protein 6-5">
    <location>
        <begin position="1"/>
        <end position="78"/>
    </location>
</feature>
<feature type="region of interest" description="25 X 2 AA repeats of G-[YCGS]" evidence="2">
    <location>
        <begin position="3"/>
        <end position="76"/>
    </location>
</feature>
<accession>Q925H3</accession>
<dbReference type="EMBL" id="AF345298">
    <property type="protein sequence ID" value="AAK52896.1"/>
    <property type="molecule type" value="mRNA"/>
</dbReference>
<dbReference type="EMBL" id="AK003281">
    <property type="protein sequence ID" value="BAC25027.1"/>
    <property type="molecule type" value="mRNA"/>
</dbReference>
<dbReference type="EMBL" id="BC132612">
    <property type="protein sequence ID" value="AAI32613.1"/>
    <property type="molecule type" value="mRNA"/>
</dbReference>
<dbReference type="CCDS" id="CCDS37390.1"/>
<dbReference type="RefSeq" id="NP_570926.1">
    <property type="nucleotide sequence ID" value="NM_130856.2"/>
</dbReference>
<dbReference type="FunCoup" id="Q925H3">
    <property type="interactions" value="55"/>
</dbReference>
<dbReference type="STRING" id="10090.ENSMUSP00000074211"/>
<dbReference type="PaxDb" id="10090-ENSMUSP00000074211"/>
<dbReference type="Ensembl" id="ENSMUST00000074637.4">
    <property type="protein sequence ID" value="ENSMUSP00000074211.3"/>
    <property type="gene ID" value="ENSMUSG00000062400.4"/>
</dbReference>
<dbReference type="GeneID" id="68484"/>
<dbReference type="KEGG" id="mmu:68484"/>
<dbReference type="UCSC" id="uc012ahz.1">
    <property type="organism name" value="mouse"/>
</dbReference>
<dbReference type="AGR" id="MGI:1915734"/>
<dbReference type="CTD" id="68484"/>
<dbReference type="MGI" id="MGI:1915734">
    <property type="gene designation" value="Krtap6-5"/>
</dbReference>
<dbReference type="VEuPathDB" id="HostDB:ENSMUSG00000062400"/>
<dbReference type="GeneTree" id="ENSGT00920000149427"/>
<dbReference type="HOGENOM" id="CLU_182642_0_0_1"/>
<dbReference type="InParanoid" id="Q925H3"/>
<dbReference type="OMA" id="CGYRSCY"/>
<dbReference type="Reactome" id="R-MMU-6805567">
    <property type="pathway name" value="Keratinization"/>
</dbReference>
<dbReference type="BioGRID-ORCS" id="68484">
    <property type="hits" value="6 hits in 42 CRISPR screens"/>
</dbReference>
<dbReference type="ChiTaRS" id="Krtap6-5">
    <property type="organism name" value="mouse"/>
</dbReference>
<dbReference type="PRO" id="PR:Q925H3"/>
<dbReference type="Proteomes" id="UP000000589">
    <property type="component" value="Chromosome 16"/>
</dbReference>
<dbReference type="RNAct" id="Q925H3">
    <property type="molecule type" value="protein"/>
</dbReference>
<dbReference type="Bgee" id="ENSMUSG00000062400">
    <property type="expression patterns" value="Expressed in tail skin and 13 other cell types or tissues"/>
</dbReference>
<dbReference type="GO" id="GO:0005882">
    <property type="term" value="C:intermediate filament"/>
    <property type="evidence" value="ECO:0007669"/>
    <property type="project" value="UniProtKB-KW"/>
</dbReference>
<dbReference type="GO" id="GO:0031424">
    <property type="term" value="P:keratinization"/>
    <property type="evidence" value="ECO:0007669"/>
    <property type="project" value="InterPro"/>
</dbReference>
<dbReference type="InterPro" id="IPR040313">
    <property type="entry name" value="KAP6"/>
</dbReference>
<dbReference type="PANTHER" id="PTHR31678:SF2">
    <property type="entry name" value="KERATIN-ASSOCIATED PROTEIN 6-1"/>
    <property type="match status" value="1"/>
</dbReference>
<dbReference type="PANTHER" id="PTHR31678">
    <property type="entry name" value="KERATIN-ASSOCIATED PROTEIN 6-3"/>
    <property type="match status" value="1"/>
</dbReference>
<keyword id="KW-0416">Keratin</keyword>
<keyword id="KW-1185">Reference proteome</keyword>
<keyword id="KW-0677">Repeat</keyword>
<reference evidence="7 9" key="1">
    <citation type="journal article" date="2001" name="Development">
        <title>Overexpression of Hoxc13 in differentiating keratinocytes results in downregulation of a novel hair keratin gene cluster and alopecia.</title>
        <authorList>
            <person name="Tkatchenko A.V."/>
            <person name="Visconti R.P."/>
            <person name="Shang L."/>
            <person name="Papenbrock T."/>
            <person name="Pruett N.D."/>
            <person name="Ito T."/>
            <person name="Ogawa M."/>
            <person name="Awgulewitsch A."/>
        </authorList>
    </citation>
    <scope>NUCLEOTIDE SEQUENCE [MRNA]</scope>
    <scope>INDUCTION</scope>
    <source>
        <strain evidence="9">FVB/NJ</strain>
        <tissue evidence="3">Skin</tissue>
    </source>
</reference>
<reference evidence="10" key="2">
    <citation type="journal article" date="2005" name="Science">
        <title>The transcriptional landscape of the mammalian genome.</title>
        <authorList>
            <person name="Carninci P."/>
            <person name="Kasukawa T."/>
            <person name="Katayama S."/>
            <person name="Gough J."/>
            <person name="Frith M.C."/>
            <person name="Maeda N."/>
            <person name="Oyama R."/>
            <person name="Ravasi T."/>
            <person name="Lenhard B."/>
            <person name="Wells C."/>
            <person name="Kodzius R."/>
            <person name="Shimokawa K."/>
            <person name="Bajic V.B."/>
            <person name="Brenner S.E."/>
            <person name="Batalov S."/>
            <person name="Forrest A.R."/>
            <person name="Zavolan M."/>
            <person name="Davis M.J."/>
            <person name="Wilming L.G."/>
            <person name="Aidinis V."/>
            <person name="Allen J.E."/>
            <person name="Ambesi-Impiombato A."/>
            <person name="Apweiler R."/>
            <person name="Aturaliya R.N."/>
            <person name="Bailey T.L."/>
            <person name="Bansal M."/>
            <person name="Baxter L."/>
            <person name="Beisel K.W."/>
            <person name="Bersano T."/>
            <person name="Bono H."/>
            <person name="Chalk A.M."/>
            <person name="Chiu K.P."/>
            <person name="Choudhary V."/>
            <person name="Christoffels A."/>
            <person name="Clutterbuck D.R."/>
            <person name="Crowe M.L."/>
            <person name="Dalla E."/>
            <person name="Dalrymple B.P."/>
            <person name="de Bono B."/>
            <person name="Della Gatta G."/>
            <person name="di Bernardo D."/>
            <person name="Down T."/>
            <person name="Engstrom P."/>
            <person name="Fagiolini M."/>
            <person name="Faulkner G."/>
            <person name="Fletcher C.F."/>
            <person name="Fukushima T."/>
            <person name="Furuno M."/>
            <person name="Futaki S."/>
            <person name="Gariboldi M."/>
            <person name="Georgii-Hemming P."/>
            <person name="Gingeras T.R."/>
            <person name="Gojobori T."/>
            <person name="Green R.E."/>
            <person name="Gustincich S."/>
            <person name="Harbers M."/>
            <person name="Hayashi Y."/>
            <person name="Hensch T.K."/>
            <person name="Hirokawa N."/>
            <person name="Hill D."/>
            <person name="Huminiecki L."/>
            <person name="Iacono M."/>
            <person name="Ikeo K."/>
            <person name="Iwama A."/>
            <person name="Ishikawa T."/>
            <person name="Jakt M."/>
            <person name="Kanapin A."/>
            <person name="Katoh M."/>
            <person name="Kawasawa Y."/>
            <person name="Kelso J."/>
            <person name="Kitamura H."/>
            <person name="Kitano H."/>
            <person name="Kollias G."/>
            <person name="Krishnan S.P."/>
            <person name="Kruger A."/>
            <person name="Kummerfeld S.K."/>
            <person name="Kurochkin I.V."/>
            <person name="Lareau L.F."/>
            <person name="Lazarevic D."/>
            <person name="Lipovich L."/>
            <person name="Liu J."/>
            <person name="Liuni S."/>
            <person name="McWilliam S."/>
            <person name="Madan Babu M."/>
            <person name="Madera M."/>
            <person name="Marchionni L."/>
            <person name="Matsuda H."/>
            <person name="Matsuzawa S."/>
            <person name="Miki H."/>
            <person name="Mignone F."/>
            <person name="Miyake S."/>
            <person name="Morris K."/>
            <person name="Mottagui-Tabar S."/>
            <person name="Mulder N."/>
            <person name="Nakano N."/>
            <person name="Nakauchi H."/>
            <person name="Ng P."/>
            <person name="Nilsson R."/>
            <person name="Nishiguchi S."/>
            <person name="Nishikawa S."/>
            <person name="Nori F."/>
            <person name="Ohara O."/>
            <person name="Okazaki Y."/>
            <person name="Orlando V."/>
            <person name="Pang K.C."/>
            <person name="Pavan W.J."/>
            <person name="Pavesi G."/>
            <person name="Pesole G."/>
            <person name="Petrovsky N."/>
            <person name="Piazza S."/>
            <person name="Reed J."/>
            <person name="Reid J.F."/>
            <person name="Ring B.Z."/>
            <person name="Ringwald M."/>
            <person name="Rost B."/>
            <person name="Ruan Y."/>
            <person name="Salzberg S.L."/>
            <person name="Sandelin A."/>
            <person name="Schneider C."/>
            <person name="Schoenbach C."/>
            <person name="Sekiguchi K."/>
            <person name="Semple C.A."/>
            <person name="Seno S."/>
            <person name="Sessa L."/>
            <person name="Sheng Y."/>
            <person name="Shibata Y."/>
            <person name="Shimada H."/>
            <person name="Shimada K."/>
            <person name="Silva D."/>
            <person name="Sinclair B."/>
            <person name="Sperling S."/>
            <person name="Stupka E."/>
            <person name="Sugiura K."/>
            <person name="Sultana R."/>
            <person name="Takenaka Y."/>
            <person name="Taki K."/>
            <person name="Tammoja K."/>
            <person name="Tan S.L."/>
            <person name="Tang S."/>
            <person name="Taylor M.S."/>
            <person name="Tegner J."/>
            <person name="Teichmann S.A."/>
            <person name="Ueda H.R."/>
            <person name="van Nimwegen E."/>
            <person name="Verardo R."/>
            <person name="Wei C.L."/>
            <person name="Yagi K."/>
            <person name="Yamanishi H."/>
            <person name="Zabarovsky E."/>
            <person name="Zhu S."/>
            <person name="Zimmer A."/>
            <person name="Hide W."/>
            <person name="Bult C."/>
            <person name="Grimmond S.M."/>
            <person name="Teasdale R.D."/>
            <person name="Liu E.T."/>
            <person name="Brusic V."/>
            <person name="Quackenbush J."/>
            <person name="Wahlestedt C."/>
            <person name="Mattick J.S."/>
            <person name="Hume D.A."/>
            <person name="Kai C."/>
            <person name="Sasaki D."/>
            <person name="Tomaru Y."/>
            <person name="Fukuda S."/>
            <person name="Kanamori-Katayama M."/>
            <person name="Suzuki M."/>
            <person name="Aoki J."/>
            <person name="Arakawa T."/>
            <person name="Iida J."/>
            <person name="Imamura K."/>
            <person name="Itoh M."/>
            <person name="Kato T."/>
            <person name="Kawaji H."/>
            <person name="Kawagashira N."/>
            <person name="Kawashima T."/>
            <person name="Kojima M."/>
            <person name="Kondo S."/>
            <person name="Konno H."/>
            <person name="Nakano K."/>
            <person name="Ninomiya N."/>
            <person name="Nishio T."/>
            <person name="Okada M."/>
            <person name="Plessy C."/>
            <person name="Shibata K."/>
            <person name="Shiraki T."/>
            <person name="Suzuki S."/>
            <person name="Tagami M."/>
            <person name="Waki K."/>
            <person name="Watahiki A."/>
            <person name="Okamura-Oho Y."/>
            <person name="Suzuki H."/>
            <person name="Kawai J."/>
            <person name="Hayashizaki Y."/>
        </authorList>
    </citation>
    <scope>NUCLEOTIDE SEQUENCE [LARGE SCALE MRNA]</scope>
    <source>
        <strain evidence="10">C57BL/6J</strain>
        <tissue evidence="10">Embryo</tissue>
    </source>
</reference>
<reference evidence="8" key="3">
    <citation type="journal article" date="2004" name="Genome Res.">
        <title>The status, quality, and expansion of the NIH full-length cDNA project: the Mammalian Gene Collection (MGC).</title>
        <authorList>
            <consortium name="The MGC Project Team"/>
        </authorList>
    </citation>
    <scope>NUCLEOTIDE SEQUENCE [LARGE SCALE MRNA]</scope>
</reference>
<reference evidence="7" key="4">
    <citation type="journal article" date="2004" name="J. Biol. Chem.">
        <title>Krtap16, characterization of a new hair keratin-associated protein (KAP) gene complex on mouse chromosome 16 and evidence for regulation by Hoxc13.</title>
        <authorList>
            <person name="Pruett N.D."/>
            <person name="Tkatchenko T.V."/>
            <person name="Jave-Suarez L."/>
            <person name="Jacobs D.F."/>
            <person name="Potter C.S."/>
            <person name="Tkatchenko A.V."/>
            <person name="Schweizer J."/>
            <person name="Awgulewitsch A."/>
        </authorList>
    </citation>
    <scope>TISSUE SPECIFICITY</scope>
</reference>
<reference evidence="7" key="5">
    <citation type="journal article" date="2007" name="Development">
        <title>Transcriptome and phenotypic analysis reveals Gata3-dependent signalling pathways in murine hair follicles.</title>
        <authorList>
            <person name="Kurek D."/>
            <person name="Garinis G.A."/>
            <person name="van Doorninck J.H."/>
            <person name="van der Wees J."/>
            <person name="Grosveld F.G."/>
        </authorList>
    </citation>
    <scope>INDUCTION</scope>
</reference>